<proteinExistence type="inferred from homology"/>
<sequence>MKVILKSDIANVGRQGEIKEVSAGFARNYLIPQSLVMEANDLNLKIWKRERGILEKHREEIINSAREIAFKMEASKFTAKVKIGENGKIFGSITTATLVKIFEDNGFKVNKRDIILSDNIKEIGDHEISVRFHPEVVAKIKLSVINEKE</sequence>
<evidence type="ECO:0000255" key="1">
    <source>
        <dbReference type="HAMAP-Rule" id="MF_00503"/>
    </source>
</evidence>
<evidence type="ECO:0000305" key="2"/>
<reference key="1">
    <citation type="journal article" date="2008" name="Proc. Natl. Acad. Sci. U.S.A.">
        <title>Complete genome of the uncultured termite group 1 bacteria in a single host protist cell.</title>
        <authorList>
            <person name="Hongoh Y."/>
            <person name="Sharma V.K."/>
            <person name="Prakash T."/>
            <person name="Noda S."/>
            <person name="Taylor T.D."/>
            <person name="Kudo T."/>
            <person name="Sakaki Y."/>
            <person name="Toyoda A."/>
            <person name="Hattori M."/>
            <person name="Ohkuma M."/>
        </authorList>
    </citation>
    <scope>NUCLEOTIDE SEQUENCE [LARGE SCALE GENOMIC DNA]</scope>
</reference>
<organism>
    <name type="scientific">Endomicrobium trichonymphae</name>
    <dbReference type="NCBI Taxonomy" id="1408204"/>
    <lineage>
        <taxon>Bacteria</taxon>
        <taxon>Pseudomonadati</taxon>
        <taxon>Elusimicrobiota</taxon>
        <taxon>Endomicrobiia</taxon>
        <taxon>Endomicrobiales</taxon>
        <taxon>Endomicrobiaceae</taxon>
        <taxon>Candidatus Endomicrobiellum</taxon>
    </lineage>
</organism>
<accession>B1H014</accession>
<dbReference type="EMBL" id="AP009510">
    <property type="protein sequence ID" value="BAG13846.1"/>
    <property type="molecule type" value="Genomic_DNA"/>
</dbReference>
<dbReference type="RefSeq" id="WP_015423373.1">
    <property type="nucleotide sequence ID" value="NC_020419.1"/>
</dbReference>
<dbReference type="SMR" id="B1H014"/>
<dbReference type="STRING" id="471821.TGRD_363"/>
<dbReference type="KEGG" id="rsd:TGRD_363"/>
<dbReference type="PATRIC" id="fig|471821.5.peg.592"/>
<dbReference type="HOGENOM" id="CLU_078938_3_0_0"/>
<dbReference type="Proteomes" id="UP000001691">
    <property type="component" value="Chromosome"/>
</dbReference>
<dbReference type="GO" id="GO:1990904">
    <property type="term" value="C:ribonucleoprotein complex"/>
    <property type="evidence" value="ECO:0007669"/>
    <property type="project" value="UniProtKB-KW"/>
</dbReference>
<dbReference type="GO" id="GO:0005840">
    <property type="term" value="C:ribosome"/>
    <property type="evidence" value="ECO:0007669"/>
    <property type="project" value="UniProtKB-KW"/>
</dbReference>
<dbReference type="GO" id="GO:0019843">
    <property type="term" value="F:rRNA binding"/>
    <property type="evidence" value="ECO:0007669"/>
    <property type="project" value="UniProtKB-UniRule"/>
</dbReference>
<dbReference type="GO" id="GO:0003735">
    <property type="term" value="F:structural constituent of ribosome"/>
    <property type="evidence" value="ECO:0007669"/>
    <property type="project" value="InterPro"/>
</dbReference>
<dbReference type="GO" id="GO:0006412">
    <property type="term" value="P:translation"/>
    <property type="evidence" value="ECO:0007669"/>
    <property type="project" value="UniProtKB-UniRule"/>
</dbReference>
<dbReference type="Gene3D" id="3.10.430.100">
    <property type="entry name" value="Ribosomal protein L9, C-terminal domain"/>
    <property type="match status" value="1"/>
</dbReference>
<dbReference type="Gene3D" id="3.40.5.10">
    <property type="entry name" value="Ribosomal protein L9, N-terminal domain"/>
    <property type="match status" value="1"/>
</dbReference>
<dbReference type="HAMAP" id="MF_00503">
    <property type="entry name" value="Ribosomal_bL9"/>
    <property type="match status" value="1"/>
</dbReference>
<dbReference type="InterPro" id="IPR000244">
    <property type="entry name" value="Ribosomal_bL9"/>
</dbReference>
<dbReference type="InterPro" id="IPR009027">
    <property type="entry name" value="Ribosomal_bL9/RNase_H1_N"/>
</dbReference>
<dbReference type="InterPro" id="IPR020594">
    <property type="entry name" value="Ribosomal_bL9_bac/chp"/>
</dbReference>
<dbReference type="InterPro" id="IPR020069">
    <property type="entry name" value="Ribosomal_bL9_C"/>
</dbReference>
<dbReference type="InterPro" id="IPR036791">
    <property type="entry name" value="Ribosomal_bL9_C_sf"/>
</dbReference>
<dbReference type="InterPro" id="IPR020070">
    <property type="entry name" value="Ribosomal_bL9_N"/>
</dbReference>
<dbReference type="InterPro" id="IPR036935">
    <property type="entry name" value="Ribosomal_bL9_N_sf"/>
</dbReference>
<dbReference type="NCBIfam" id="TIGR00158">
    <property type="entry name" value="L9"/>
    <property type="match status" value="1"/>
</dbReference>
<dbReference type="PANTHER" id="PTHR21368">
    <property type="entry name" value="50S RIBOSOMAL PROTEIN L9"/>
    <property type="match status" value="1"/>
</dbReference>
<dbReference type="Pfam" id="PF03948">
    <property type="entry name" value="Ribosomal_L9_C"/>
    <property type="match status" value="1"/>
</dbReference>
<dbReference type="Pfam" id="PF01281">
    <property type="entry name" value="Ribosomal_L9_N"/>
    <property type="match status" value="1"/>
</dbReference>
<dbReference type="SUPFAM" id="SSF55658">
    <property type="entry name" value="L9 N-domain-like"/>
    <property type="match status" value="1"/>
</dbReference>
<dbReference type="SUPFAM" id="SSF55653">
    <property type="entry name" value="Ribosomal protein L9 C-domain"/>
    <property type="match status" value="1"/>
</dbReference>
<feature type="chain" id="PRO_1000126990" description="Large ribosomal subunit protein bL9">
    <location>
        <begin position="1"/>
        <end position="149"/>
    </location>
</feature>
<name>RL9_ENDTX</name>
<gene>
    <name evidence="1" type="primary">rplI</name>
    <name type="ordered locus">TGRD_363</name>
</gene>
<comment type="function">
    <text evidence="1">Binds to the 23S rRNA.</text>
</comment>
<comment type="similarity">
    <text evidence="1">Belongs to the bacterial ribosomal protein bL9 family.</text>
</comment>
<keyword id="KW-0687">Ribonucleoprotein</keyword>
<keyword id="KW-0689">Ribosomal protein</keyword>
<keyword id="KW-0694">RNA-binding</keyword>
<keyword id="KW-0699">rRNA-binding</keyword>
<protein>
    <recommendedName>
        <fullName evidence="1">Large ribosomal subunit protein bL9</fullName>
    </recommendedName>
    <alternativeName>
        <fullName evidence="2">50S ribosomal protein L9</fullName>
    </alternativeName>
</protein>